<protein>
    <recommendedName>
        <fullName evidence="2">Ornithine carbamoyltransferase</fullName>
        <shortName evidence="2">OTCase</shortName>
        <ecNumber evidence="2">2.1.3.3</ecNumber>
    </recommendedName>
</protein>
<comment type="function">
    <text evidence="1">Reversibly catalyzes the transfer of the carbamoyl group from carbamoyl phosphate (CP) to the N(epsilon) atom of ornithine (ORN) to produce L-citrulline.</text>
</comment>
<comment type="catalytic activity">
    <reaction evidence="2">
        <text>carbamoyl phosphate + L-ornithine = L-citrulline + phosphate + H(+)</text>
        <dbReference type="Rhea" id="RHEA:19513"/>
        <dbReference type="ChEBI" id="CHEBI:15378"/>
        <dbReference type="ChEBI" id="CHEBI:43474"/>
        <dbReference type="ChEBI" id="CHEBI:46911"/>
        <dbReference type="ChEBI" id="CHEBI:57743"/>
        <dbReference type="ChEBI" id="CHEBI:58228"/>
        <dbReference type="EC" id="2.1.3.3"/>
    </reaction>
</comment>
<comment type="pathway">
    <text evidence="2">Amino-acid biosynthesis; L-arginine biosynthesis; L-arginine from L-ornithine and carbamoyl phosphate: step 1/3.</text>
</comment>
<comment type="subcellular location">
    <subcellularLocation>
        <location evidence="2">Cytoplasm</location>
    </subcellularLocation>
</comment>
<comment type="similarity">
    <text evidence="2">Belongs to the aspartate/ornithine carbamoyltransferase superfamily. OTCase family.</text>
</comment>
<evidence type="ECO:0000250" key="1"/>
<evidence type="ECO:0000255" key="2">
    <source>
        <dbReference type="HAMAP-Rule" id="MF_01109"/>
    </source>
</evidence>
<keyword id="KW-0028">Amino-acid biosynthesis</keyword>
<keyword id="KW-0055">Arginine biosynthesis</keyword>
<keyword id="KW-0963">Cytoplasm</keyword>
<keyword id="KW-1185">Reference proteome</keyword>
<keyword id="KW-0808">Transferase</keyword>
<gene>
    <name evidence="2" type="primary">argF</name>
    <name type="ordered locus">GSU0152</name>
</gene>
<sequence>MIRHFLALNQFTKEELDGLFTLSRELKDKQKQGVPHRLLEGKSVALIFEKSSTRTRVSFEVGVAQLGAHPLFISSATSQMGRGEPIKDTARVMARYCDGVMIRTYGQEIVEEFARYSSVPVINGLTDLFHPCQIMADLFTVIEYKGGYQGLKFAWVGDGNNMANTWIEAAAILGFDLALACPTGYEPDRQVWDWAQQRATSSITITEDPEEAVRDADVVNTDVWASMGQEQEQKEREAAFQGYCLDDALVALARPDCMVLHCLPAHRGEEITDSVIEGPRSAVWDEAENRLHIQKAIMASLMK</sequence>
<dbReference type="EC" id="2.1.3.3" evidence="2"/>
<dbReference type="EMBL" id="AE017180">
    <property type="protein sequence ID" value="AAR33487.1"/>
    <property type="molecule type" value="Genomic_DNA"/>
</dbReference>
<dbReference type="RefSeq" id="NP_951214.1">
    <property type="nucleotide sequence ID" value="NC_002939.5"/>
</dbReference>
<dbReference type="RefSeq" id="WP_010940828.1">
    <property type="nucleotide sequence ID" value="NC_002939.5"/>
</dbReference>
<dbReference type="SMR" id="Q74GU2"/>
<dbReference type="FunCoup" id="Q74GU2">
    <property type="interactions" value="453"/>
</dbReference>
<dbReference type="STRING" id="243231.GSU0152"/>
<dbReference type="EnsemblBacteria" id="AAR33487">
    <property type="protein sequence ID" value="AAR33487"/>
    <property type="gene ID" value="GSU0152"/>
</dbReference>
<dbReference type="KEGG" id="gsu:GSU0152"/>
<dbReference type="PATRIC" id="fig|243231.5.peg.153"/>
<dbReference type="eggNOG" id="COG0078">
    <property type="taxonomic scope" value="Bacteria"/>
</dbReference>
<dbReference type="HOGENOM" id="CLU_043846_3_2_7"/>
<dbReference type="InParanoid" id="Q74GU2"/>
<dbReference type="OrthoDB" id="9802587at2"/>
<dbReference type="UniPathway" id="UPA00068">
    <property type="reaction ID" value="UER00112"/>
</dbReference>
<dbReference type="Proteomes" id="UP000000577">
    <property type="component" value="Chromosome"/>
</dbReference>
<dbReference type="GO" id="GO:0005737">
    <property type="term" value="C:cytoplasm"/>
    <property type="evidence" value="ECO:0007669"/>
    <property type="project" value="UniProtKB-SubCell"/>
</dbReference>
<dbReference type="GO" id="GO:0016597">
    <property type="term" value="F:amino acid binding"/>
    <property type="evidence" value="ECO:0007669"/>
    <property type="project" value="InterPro"/>
</dbReference>
<dbReference type="GO" id="GO:0004585">
    <property type="term" value="F:ornithine carbamoyltransferase activity"/>
    <property type="evidence" value="ECO:0000318"/>
    <property type="project" value="GO_Central"/>
</dbReference>
<dbReference type="GO" id="GO:0042450">
    <property type="term" value="P:arginine biosynthetic process via ornithine"/>
    <property type="evidence" value="ECO:0000318"/>
    <property type="project" value="GO_Central"/>
</dbReference>
<dbReference type="GO" id="GO:0019240">
    <property type="term" value="P:citrulline biosynthetic process"/>
    <property type="evidence" value="ECO:0000318"/>
    <property type="project" value="GO_Central"/>
</dbReference>
<dbReference type="GO" id="GO:0006526">
    <property type="term" value="P:L-arginine biosynthetic process"/>
    <property type="evidence" value="ECO:0007669"/>
    <property type="project" value="UniProtKB-UniRule"/>
</dbReference>
<dbReference type="FunFam" id="3.40.50.1370:FF:000008">
    <property type="entry name" value="Ornithine carbamoyltransferase"/>
    <property type="match status" value="1"/>
</dbReference>
<dbReference type="Gene3D" id="3.40.50.1370">
    <property type="entry name" value="Aspartate/ornithine carbamoyltransferase"/>
    <property type="match status" value="2"/>
</dbReference>
<dbReference type="HAMAP" id="MF_01109">
    <property type="entry name" value="OTCase"/>
    <property type="match status" value="1"/>
</dbReference>
<dbReference type="InterPro" id="IPR006132">
    <property type="entry name" value="Asp/Orn_carbamoyltranf_P-bd"/>
</dbReference>
<dbReference type="InterPro" id="IPR006130">
    <property type="entry name" value="Asp/Orn_carbamoylTrfase"/>
</dbReference>
<dbReference type="InterPro" id="IPR036901">
    <property type="entry name" value="Asp/Orn_carbamoylTrfase_sf"/>
</dbReference>
<dbReference type="InterPro" id="IPR006131">
    <property type="entry name" value="Asp_carbamoyltransf_Asp/Orn-bd"/>
</dbReference>
<dbReference type="InterPro" id="IPR002292">
    <property type="entry name" value="Orn/put_carbamltrans"/>
</dbReference>
<dbReference type="InterPro" id="IPR024904">
    <property type="entry name" value="OTCase_ArgI"/>
</dbReference>
<dbReference type="NCBIfam" id="TIGR00658">
    <property type="entry name" value="orni_carb_tr"/>
    <property type="match status" value="1"/>
</dbReference>
<dbReference type="NCBIfam" id="NF001986">
    <property type="entry name" value="PRK00779.1"/>
    <property type="match status" value="1"/>
</dbReference>
<dbReference type="PANTHER" id="PTHR45753">
    <property type="entry name" value="ORNITHINE CARBAMOYLTRANSFERASE, MITOCHONDRIAL"/>
    <property type="match status" value="1"/>
</dbReference>
<dbReference type="PANTHER" id="PTHR45753:SF3">
    <property type="entry name" value="ORNITHINE TRANSCARBAMYLASE, MITOCHONDRIAL"/>
    <property type="match status" value="1"/>
</dbReference>
<dbReference type="Pfam" id="PF00185">
    <property type="entry name" value="OTCace"/>
    <property type="match status" value="1"/>
</dbReference>
<dbReference type="Pfam" id="PF02729">
    <property type="entry name" value="OTCace_N"/>
    <property type="match status" value="1"/>
</dbReference>
<dbReference type="PRINTS" id="PR00100">
    <property type="entry name" value="AOTCASE"/>
</dbReference>
<dbReference type="PRINTS" id="PR00102">
    <property type="entry name" value="OTCASE"/>
</dbReference>
<dbReference type="SUPFAM" id="SSF53671">
    <property type="entry name" value="Aspartate/ornithine carbamoyltransferase"/>
    <property type="match status" value="1"/>
</dbReference>
<dbReference type="PROSITE" id="PS00097">
    <property type="entry name" value="CARBAMOYLTRANSFERASE"/>
    <property type="match status" value="1"/>
</dbReference>
<reference key="1">
    <citation type="journal article" date="2003" name="Science">
        <title>Genome of Geobacter sulfurreducens: metal reduction in subsurface environments.</title>
        <authorList>
            <person name="Methe B.A."/>
            <person name="Nelson K.E."/>
            <person name="Eisen J.A."/>
            <person name="Paulsen I.T."/>
            <person name="Nelson W.C."/>
            <person name="Heidelberg J.F."/>
            <person name="Wu D."/>
            <person name="Wu M."/>
            <person name="Ward N.L."/>
            <person name="Beanan M.J."/>
            <person name="Dodson R.J."/>
            <person name="Madupu R."/>
            <person name="Brinkac L.M."/>
            <person name="Daugherty S.C."/>
            <person name="DeBoy R.T."/>
            <person name="Durkin A.S."/>
            <person name="Gwinn M.L."/>
            <person name="Kolonay J.F."/>
            <person name="Sullivan S.A."/>
            <person name="Haft D.H."/>
            <person name="Selengut J."/>
            <person name="Davidsen T.M."/>
            <person name="Zafar N."/>
            <person name="White O."/>
            <person name="Tran B."/>
            <person name="Romero C."/>
            <person name="Forberger H.A."/>
            <person name="Weidman J.F."/>
            <person name="Khouri H.M."/>
            <person name="Feldblyum T.V."/>
            <person name="Utterback T.R."/>
            <person name="Van Aken S.E."/>
            <person name="Lovley D.R."/>
            <person name="Fraser C.M."/>
        </authorList>
    </citation>
    <scope>NUCLEOTIDE SEQUENCE [LARGE SCALE GENOMIC DNA]</scope>
    <source>
        <strain>ATCC 51573 / DSM 12127 / PCA</strain>
    </source>
</reference>
<proteinExistence type="inferred from homology"/>
<feature type="chain" id="PRO_0000112926" description="Ornithine carbamoyltransferase">
    <location>
        <begin position="1"/>
        <end position="303"/>
    </location>
</feature>
<feature type="binding site" evidence="2">
    <location>
        <begin position="52"/>
        <end position="55"/>
    </location>
    <ligand>
        <name>carbamoyl phosphate</name>
        <dbReference type="ChEBI" id="CHEBI:58228"/>
    </ligand>
</feature>
<feature type="binding site" evidence="2">
    <location>
        <position position="79"/>
    </location>
    <ligand>
        <name>carbamoyl phosphate</name>
        <dbReference type="ChEBI" id="CHEBI:58228"/>
    </ligand>
</feature>
<feature type="binding site" evidence="2">
    <location>
        <position position="103"/>
    </location>
    <ligand>
        <name>carbamoyl phosphate</name>
        <dbReference type="ChEBI" id="CHEBI:58228"/>
    </ligand>
</feature>
<feature type="binding site" evidence="2">
    <location>
        <begin position="130"/>
        <end position="133"/>
    </location>
    <ligand>
        <name>carbamoyl phosphate</name>
        <dbReference type="ChEBI" id="CHEBI:58228"/>
    </ligand>
</feature>
<feature type="binding site" evidence="2">
    <location>
        <position position="161"/>
    </location>
    <ligand>
        <name>L-ornithine</name>
        <dbReference type="ChEBI" id="CHEBI:46911"/>
    </ligand>
</feature>
<feature type="binding site" evidence="2">
    <location>
        <position position="222"/>
    </location>
    <ligand>
        <name>L-ornithine</name>
        <dbReference type="ChEBI" id="CHEBI:46911"/>
    </ligand>
</feature>
<feature type="binding site" evidence="2">
    <location>
        <begin position="226"/>
        <end position="227"/>
    </location>
    <ligand>
        <name>L-ornithine</name>
        <dbReference type="ChEBI" id="CHEBI:46911"/>
    </ligand>
</feature>
<feature type="binding site" evidence="2">
    <location>
        <begin position="262"/>
        <end position="263"/>
    </location>
    <ligand>
        <name>carbamoyl phosphate</name>
        <dbReference type="ChEBI" id="CHEBI:58228"/>
    </ligand>
</feature>
<feature type="binding site" evidence="2">
    <location>
        <position position="290"/>
    </location>
    <ligand>
        <name>carbamoyl phosphate</name>
        <dbReference type="ChEBI" id="CHEBI:58228"/>
    </ligand>
</feature>
<name>OTC_GEOSL</name>
<organism>
    <name type="scientific">Geobacter sulfurreducens (strain ATCC 51573 / DSM 12127 / PCA)</name>
    <dbReference type="NCBI Taxonomy" id="243231"/>
    <lineage>
        <taxon>Bacteria</taxon>
        <taxon>Pseudomonadati</taxon>
        <taxon>Thermodesulfobacteriota</taxon>
        <taxon>Desulfuromonadia</taxon>
        <taxon>Geobacterales</taxon>
        <taxon>Geobacteraceae</taxon>
        <taxon>Geobacter</taxon>
    </lineage>
</organism>
<accession>Q74GU2</accession>